<proteinExistence type="inferred from homology"/>
<keyword id="KW-0012">Acyltransferase</keyword>
<keyword id="KW-0808">Transferase</keyword>
<evidence type="ECO:0000250" key="1">
    <source>
        <dbReference type="UniProtKB" id="Q70PR7"/>
    </source>
</evidence>
<evidence type="ECO:0000269" key="2">
    <source>
    </source>
</evidence>
<evidence type="ECO:0000303" key="3">
    <source>
    </source>
</evidence>
<evidence type="ECO:0000305" key="4"/>
<sequence>MSAEYTCRSTNPWADSSTIYAGLVVNAVLDLDILHEKQKELISLWPILGGTVVQSTKPWSFTCGSNVDFESRTLDETVSTHFPNNWGNMTGPSASTTLDPAIVDAKFLFAIKPAPSTIFRIRVTVLRDATLVCFGITHQVTGAGGCFEVVSAFCDLLANRAIPHFALPPDARGLKLSDHITGGDDNVTSDELGDFEPPEKNWNIGVVKAATMMWRVLIAQFWKTLGLREKLTEKYIHLPGDWVDEVRNQAQKELSSLPESSDVELTRNDIISAWYLKTIHGPSSSSGCDTTPVDFYVAINYKGLLNPNTTGGCSEKGPSAEQQQTQYLHHSVAIFRCMFSAYQLQNDSISSIAWRIRRATLHYKQPSSIKKYVRFVEKNNSNLLVVDIRASNPFSMVGLSSWTTYNYMALDFSGAIGDRKAPQDGVRVTFVNPLALSPISGLTLYTLKDGKGGYVIRTANTKTQWKQLEKSSSMENLFPVL</sequence>
<protein>
    <recommendedName>
        <fullName evidence="3">Acetyltransferase peniE</fullName>
        <ecNumber evidence="4">2.3.1.-</ecNumber>
    </recommendedName>
    <alternativeName>
        <fullName evidence="3">Penifulvin A biosynthesis cluster protein E</fullName>
    </alternativeName>
</protein>
<gene>
    <name evidence="3" type="primary">peniE</name>
</gene>
<reference key="1">
    <citation type="journal article" date="2019" name="Angew. Chem. Int. Ed.">
        <title>Unprecedented [5.5.5.6]dioxafenestrane ring construction in fungal insecticidal sesquiterpene biosynthesis.</title>
        <authorList>
            <person name="Zeng H."/>
            <person name="Yin G."/>
            <person name="Wei Q."/>
            <person name="Li D."/>
            <person name="Wang Y."/>
            <person name="Hu Y."/>
            <person name="Hu C."/>
            <person name="Zou Y."/>
        </authorList>
    </citation>
    <scope>NUCLEOTIDE SEQUENCE [GENOMIC DNA]</scope>
    <scope>FUNCTION</scope>
    <scope>DISRUPTION PHENOTYPE</scope>
    <source>
        <strain>NRRL 35584</strain>
    </source>
</reference>
<organism>
    <name type="scientific">Penicillium patulum</name>
    <name type="common">Penicillium griseofulvum</name>
    <dbReference type="NCBI Taxonomy" id="5078"/>
    <lineage>
        <taxon>Eukaryota</taxon>
        <taxon>Fungi</taxon>
        <taxon>Dikarya</taxon>
        <taxon>Ascomycota</taxon>
        <taxon>Pezizomycotina</taxon>
        <taxon>Eurotiomycetes</taxon>
        <taxon>Eurotiomycetidae</taxon>
        <taxon>Eurotiales</taxon>
        <taxon>Aspergillaceae</taxon>
        <taxon>Penicillium</taxon>
    </lineage>
</organism>
<accession>A0A516F409</accession>
<feature type="chain" id="PRO_0000460301" description="Acetyltransferase peniE">
    <location>
        <begin position="1"/>
        <end position="481"/>
    </location>
</feature>
<feature type="active site" description="Proton acceptor" evidence="1">
    <location>
        <position position="164"/>
    </location>
</feature>
<feature type="active site" description="Proton acceptor" evidence="1">
    <location>
        <position position="411"/>
    </location>
</feature>
<comment type="function">
    <text evidence="2">Acetyltransferase; part of the gene cluster that mediates the biosynthesis of penifulvin A, a potent insecticidal sesquiterpene that features a [5.5.5.6]dioxafenestrane ring (PubMed:30908782). The first step of the pathway is performed by the sesquiterpene cyclase peniA that generates the angular triquinane scaffold silphinene via cyclization of the linear farnesyl pyrophosphate (FPP). The cytochrome P450 monooxygenase peniB and the flavin-dependent monooxygenase peniC then catalyze a series of oxidation reactions to transform silphinene into penifulvin A (PubMed:30908782). The dioxygenases peniD and peniF, as well as the acetyltransferase peniE, do not seem to be involved in the biosynthesis of penifulvin A (PubMed:30908782).</text>
</comment>
<comment type="subunit">
    <text evidence="1">Monomer.</text>
</comment>
<comment type="disruption phenotype">
    <text evidence="2">Does not affect the biosynthesis of penifulvin A.</text>
</comment>
<comment type="similarity">
    <text evidence="4">Belongs to the plant acyltransferase family.</text>
</comment>
<name>PENIE_PENPA</name>
<dbReference type="EC" id="2.3.1.-" evidence="4"/>
<dbReference type="EMBL" id="MK692947">
    <property type="protein sequence ID" value="QDO73506.1"/>
    <property type="molecule type" value="Genomic_DNA"/>
</dbReference>
<dbReference type="SMR" id="A0A516F409"/>
<dbReference type="GO" id="GO:0016746">
    <property type="term" value="F:acyltransferase activity"/>
    <property type="evidence" value="ECO:0007669"/>
    <property type="project" value="UniProtKB-KW"/>
</dbReference>
<dbReference type="Gene3D" id="3.30.559.10">
    <property type="entry name" value="Chloramphenicol acetyltransferase-like domain"/>
    <property type="match status" value="1"/>
</dbReference>
<dbReference type="InterPro" id="IPR023213">
    <property type="entry name" value="CAT-like_dom_sf"/>
</dbReference>